<comment type="catalytic activity">
    <reaction evidence="1">
        <text>D-arabinose 5-phosphate + phosphoenolpyruvate + H2O = 3-deoxy-alpha-D-manno-2-octulosonate-8-phosphate + phosphate</text>
        <dbReference type="Rhea" id="RHEA:14053"/>
        <dbReference type="ChEBI" id="CHEBI:15377"/>
        <dbReference type="ChEBI" id="CHEBI:43474"/>
        <dbReference type="ChEBI" id="CHEBI:57693"/>
        <dbReference type="ChEBI" id="CHEBI:58702"/>
        <dbReference type="ChEBI" id="CHEBI:85985"/>
        <dbReference type="EC" id="2.5.1.55"/>
    </reaction>
</comment>
<comment type="pathway">
    <text evidence="1">Carbohydrate biosynthesis; 3-deoxy-D-manno-octulosonate biosynthesis; 3-deoxy-D-manno-octulosonate from D-ribulose 5-phosphate: step 2/3.</text>
</comment>
<comment type="pathway">
    <text evidence="1">Bacterial outer membrane biogenesis; lipopolysaccharide biosynthesis.</text>
</comment>
<comment type="subcellular location">
    <subcellularLocation>
        <location evidence="1">Cytoplasm</location>
    </subcellularLocation>
</comment>
<comment type="similarity">
    <text evidence="1">Belongs to the KdsA family.</text>
</comment>
<organism>
    <name type="scientific">Verminephrobacter eiseniae (strain EF01-2)</name>
    <dbReference type="NCBI Taxonomy" id="391735"/>
    <lineage>
        <taxon>Bacteria</taxon>
        <taxon>Pseudomonadati</taxon>
        <taxon>Pseudomonadota</taxon>
        <taxon>Betaproteobacteria</taxon>
        <taxon>Burkholderiales</taxon>
        <taxon>Comamonadaceae</taxon>
        <taxon>Verminephrobacter</taxon>
    </lineage>
</organism>
<feature type="chain" id="PRO_0000304500" description="2-dehydro-3-deoxyphosphooctonate aldolase">
    <location>
        <begin position="1"/>
        <end position="285"/>
    </location>
</feature>
<accession>A1WL88</accession>
<proteinExistence type="inferred from homology"/>
<gene>
    <name evidence="1" type="primary">kdsA</name>
    <name type="ordered locus">Veis_2652</name>
</gene>
<dbReference type="EC" id="2.5.1.55" evidence="1"/>
<dbReference type="EMBL" id="CP000542">
    <property type="protein sequence ID" value="ABM58395.1"/>
    <property type="molecule type" value="Genomic_DNA"/>
</dbReference>
<dbReference type="RefSeq" id="WP_011810394.1">
    <property type="nucleotide sequence ID" value="NC_008786.1"/>
</dbReference>
<dbReference type="SMR" id="A1WL88"/>
<dbReference type="STRING" id="391735.Veis_2652"/>
<dbReference type="GeneID" id="76461163"/>
<dbReference type="KEGG" id="vei:Veis_2652"/>
<dbReference type="eggNOG" id="COG2877">
    <property type="taxonomic scope" value="Bacteria"/>
</dbReference>
<dbReference type="HOGENOM" id="CLU_036666_0_0_4"/>
<dbReference type="OrthoDB" id="9776934at2"/>
<dbReference type="UniPathway" id="UPA00030"/>
<dbReference type="UniPathway" id="UPA00357">
    <property type="reaction ID" value="UER00474"/>
</dbReference>
<dbReference type="Proteomes" id="UP000000374">
    <property type="component" value="Chromosome"/>
</dbReference>
<dbReference type="GO" id="GO:0005737">
    <property type="term" value="C:cytoplasm"/>
    <property type="evidence" value="ECO:0007669"/>
    <property type="project" value="UniProtKB-SubCell"/>
</dbReference>
<dbReference type="GO" id="GO:0008676">
    <property type="term" value="F:3-deoxy-8-phosphooctulonate synthase activity"/>
    <property type="evidence" value="ECO:0007669"/>
    <property type="project" value="UniProtKB-UniRule"/>
</dbReference>
<dbReference type="GO" id="GO:0019294">
    <property type="term" value="P:keto-3-deoxy-D-manno-octulosonic acid biosynthetic process"/>
    <property type="evidence" value="ECO:0007669"/>
    <property type="project" value="UniProtKB-UniRule"/>
</dbReference>
<dbReference type="Gene3D" id="3.20.20.70">
    <property type="entry name" value="Aldolase class I"/>
    <property type="match status" value="1"/>
</dbReference>
<dbReference type="HAMAP" id="MF_00056">
    <property type="entry name" value="KDO8P_synth"/>
    <property type="match status" value="1"/>
</dbReference>
<dbReference type="InterPro" id="IPR013785">
    <property type="entry name" value="Aldolase_TIM"/>
</dbReference>
<dbReference type="InterPro" id="IPR006218">
    <property type="entry name" value="DAHP1/KDSA"/>
</dbReference>
<dbReference type="InterPro" id="IPR006269">
    <property type="entry name" value="KDO8P_synthase"/>
</dbReference>
<dbReference type="NCBIfam" id="TIGR01362">
    <property type="entry name" value="KDO8P_synth"/>
    <property type="match status" value="1"/>
</dbReference>
<dbReference type="NCBIfam" id="NF003543">
    <property type="entry name" value="PRK05198.1"/>
    <property type="match status" value="1"/>
</dbReference>
<dbReference type="PANTHER" id="PTHR21057">
    <property type="entry name" value="PHOSPHO-2-DEHYDRO-3-DEOXYHEPTONATE ALDOLASE"/>
    <property type="match status" value="1"/>
</dbReference>
<dbReference type="Pfam" id="PF00793">
    <property type="entry name" value="DAHP_synth_1"/>
    <property type="match status" value="1"/>
</dbReference>
<dbReference type="SUPFAM" id="SSF51569">
    <property type="entry name" value="Aldolase"/>
    <property type="match status" value="1"/>
</dbReference>
<sequence length="285" mass="30611">MKLCGFDVGLEQRLFLIAGPCVIESAQLQMDVAGQLREITARLGMPFIFKSSFDKANRSSGSSYRGPGRDKGLEILARVRRELALPVLTDVHTEDDIAAAAQVVDVLQTPAFLCRQTDFISAAARCGKPVNIKKGQFLAPHEMHNVIDKARAAARQAGLSEDRFMACERGASFGYNNLVSDMRSLAIMRASGAPVVFDATHSVQLPGSQGSRSGGQREMVPVLARAAVAAGVAGIFMETHPDPDRALSDGPNAVPLKHMQALLETLVALDGVTKRHGFLENRFGA</sequence>
<protein>
    <recommendedName>
        <fullName evidence="1">2-dehydro-3-deoxyphosphooctonate aldolase</fullName>
        <ecNumber evidence="1">2.5.1.55</ecNumber>
    </recommendedName>
    <alternativeName>
        <fullName evidence="1">3-deoxy-D-manno-octulosonic acid 8-phosphate synthase</fullName>
    </alternativeName>
    <alternativeName>
        <fullName evidence="1">KDO-8-phosphate synthase</fullName>
        <shortName evidence="1">KDO 8-P synthase</shortName>
        <shortName evidence="1">KDOPS</shortName>
    </alternativeName>
    <alternativeName>
        <fullName evidence="1">Phospho-2-dehydro-3-deoxyoctonate aldolase</fullName>
    </alternativeName>
</protein>
<evidence type="ECO:0000255" key="1">
    <source>
        <dbReference type="HAMAP-Rule" id="MF_00056"/>
    </source>
</evidence>
<reference key="1">
    <citation type="submission" date="2006-12" db="EMBL/GenBank/DDBJ databases">
        <title>Complete sequence of chromosome 1 of Verminephrobacter eiseniae EF01-2.</title>
        <authorList>
            <person name="Copeland A."/>
            <person name="Lucas S."/>
            <person name="Lapidus A."/>
            <person name="Barry K."/>
            <person name="Detter J.C."/>
            <person name="Glavina del Rio T."/>
            <person name="Dalin E."/>
            <person name="Tice H."/>
            <person name="Pitluck S."/>
            <person name="Chertkov O."/>
            <person name="Brettin T."/>
            <person name="Bruce D."/>
            <person name="Han C."/>
            <person name="Tapia R."/>
            <person name="Gilna P."/>
            <person name="Schmutz J."/>
            <person name="Larimer F."/>
            <person name="Land M."/>
            <person name="Hauser L."/>
            <person name="Kyrpides N."/>
            <person name="Kim E."/>
            <person name="Stahl D."/>
            <person name="Richardson P."/>
        </authorList>
    </citation>
    <scope>NUCLEOTIDE SEQUENCE [LARGE SCALE GENOMIC DNA]</scope>
    <source>
        <strain>EF01-2</strain>
    </source>
</reference>
<name>KDSA_VEREI</name>
<keyword id="KW-0963">Cytoplasm</keyword>
<keyword id="KW-0448">Lipopolysaccharide biosynthesis</keyword>
<keyword id="KW-1185">Reference proteome</keyword>
<keyword id="KW-0808">Transferase</keyword>